<evidence type="ECO:0000255" key="1">
    <source>
        <dbReference type="HAMAP-Rule" id="MF_03048"/>
    </source>
</evidence>
<accession>Q7Q6I6</accession>
<keyword id="KW-0963">Cytoplasm</keyword>
<keyword id="KW-1017">Isopeptide bond</keyword>
<keyword id="KW-1185">Reference proteome</keyword>
<keyword id="KW-0819">tRNA processing</keyword>
<keyword id="KW-0833">Ubl conjugation pathway</keyword>
<reference key="1">
    <citation type="journal article" date="2002" name="Science">
        <title>The genome sequence of the malaria mosquito Anopheles gambiae.</title>
        <authorList>
            <person name="Holt R.A."/>
            <person name="Subramanian G.M."/>
            <person name="Halpern A."/>
            <person name="Sutton G.G."/>
            <person name="Charlab R."/>
            <person name="Nusskern D.R."/>
            <person name="Wincker P."/>
            <person name="Clark A.G."/>
            <person name="Ribeiro J.M.C."/>
            <person name="Wides R."/>
            <person name="Salzberg S.L."/>
            <person name="Loftus B.J."/>
            <person name="Yandell M.D."/>
            <person name="Majoros W.H."/>
            <person name="Rusch D.B."/>
            <person name="Lai Z."/>
            <person name="Kraft C.L."/>
            <person name="Abril J.F."/>
            <person name="Anthouard V."/>
            <person name="Arensburger P."/>
            <person name="Atkinson P.W."/>
            <person name="Baden H."/>
            <person name="de Berardinis V."/>
            <person name="Baldwin D."/>
            <person name="Benes V."/>
            <person name="Biedler J."/>
            <person name="Blass C."/>
            <person name="Bolanos R."/>
            <person name="Boscus D."/>
            <person name="Barnstead M."/>
            <person name="Cai S."/>
            <person name="Center A."/>
            <person name="Chaturverdi K."/>
            <person name="Christophides G.K."/>
            <person name="Chrystal M.A.M."/>
            <person name="Clamp M."/>
            <person name="Cravchik A."/>
            <person name="Curwen V."/>
            <person name="Dana A."/>
            <person name="Delcher A."/>
            <person name="Dew I."/>
            <person name="Evans C.A."/>
            <person name="Flanigan M."/>
            <person name="Grundschober-Freimoser A."/>
            <person name="Friedli L."/>
            <person name="Gu Z."/>
            <person name="Guan P."/>
            <person name="Guigo R."/>
            <person name="Hillenmeyer M.E."/>
            <person name="Hladun S.L."/>
            <person name="Hogan J.R."/>
            <person name="Hong Y.S."/>
            <person name="Hoover J."/>
            <person name="Jaillon O."/>
            <person name="Ke Z."/>
            <person name="Kodira C.D."/>
            <person name="Kokoza E."/>
            <person name="Koutsos A."/>
            <person name="Letunic I."/>
            <person name="Levitsky A.A."/>
            <person name="Liang Y."/>
            <person name="Lin J.-J."/>
            <person name="Lobo N.F."/>
            <person name="Lopez J.R."/>
            <person name="Malek J.A."/>
            <person name="McIntosh T.C."/>
            <person name="Meister S."/>
            <person name="Miller J.R."/>
            <person name="Mobarry C."/>
            <person name="Mongin E."/>
            <person name="Murphy S.D."/>
            <person name="O'Brochta D.A."/>
            <person name="Pfannkoch C."/>
            <person name="Qi R."/>
            <person name="Regier M.A."/>
            <person name="Remington K."/>
            <person name="Shao H."/>
            <person name="Sharakhova M.V."/>
            <person name="Sitter C.D."/>
            <person name="Shetty J."/>
            <person name="Smith T.J."/>
            <person name="Strong R."/>
            <person name="Sun J."/>
            <person name="Thomasova D."/>
            <person name="Ton L.Q."/>
            <person name="Topalis P."/>
            <person name="Tu Z.J."/>
            <person name="Unger M.F."/>
            <person name="Walenz B."/>
            <person name="Wang A.H."/>
            <person name="Wang J."/>
            <person name="Wang M."/>
            <person name="Wang X."/>
            <person name="Woodford K.J."/>
            <person name="Wortman J.R."/>
            <person name="Wu M."/>
            <person name="Yao A."/>
            <person name="Zdobnov E.M."/>
            <person name="Zhang H."/>
            <person name="Zhao Q."/>
            <person name="Zhao S."/>
            <person name="Zhu S.C."/>
            <person name="Zhimulev I."/>
            <person name="Coluzzi M."/>
            <person name="della Torre A."/>
            <person name="Roth C.W."/>
            <person name="Louis C."/>
            <person name="Kalush F."/>
            <person name="Mural R.J."/>
            <person name="Myers E.W."/>
            <person name="Adams M.D."/>
            <person name="Smith H.O."/>
            <person name="Broder S."/>
            <person name="Gardner M.J."/>
            <person name="Fraser C.M."/>
            <person name="Birney E."/>
            <person name="Bork P."/>
            <person name="Brey P.T."/>
            <person name="Venter J.C."/>
            <person name="Weissenbach J."/>
            <person name="Kafatos F.C."/>
            <person name="Collins F.H."/>
            <person name="Hoffman S.L."/>
        </authorList>
    </citation>
    <scope>NUCLEOTIDE SEQUENCE [LARGE SCALE GENOMIC DNA]</scope>
    <source>
        <strain>PEST</strain>
    </source>
</reference>
<organism>
    <name type="scientific">Anopheles gambiae</name>
    <name type="common">African malaria mosquito</name>
    <dbReference type="NCBI Taxonomy" id="7165"/>
    <lineage>
        <taxon>Eukaryota</taxon>
        <taxon>Metazoa</taxon>
        <taxon>Ecdysozoa</taxon>
        <taxon>Arthropoda</taxon>
        <taxon>Hexapoda</taxon>
        <taxon>Insecta</taxon>
        <taxon>Pterygota</taxon>
        <taxon>Neoptera</taxon>
        <taxon>Endopterygota</taxon>
        <taxon>Diptera</taxon>
        <taxon>Nematocera</taxon>
        <taxon>Culicoidea</taxon>
        <taxon>Culicidae</taxon>
        <taxon>Anophelinae</taxon>
        <taxon>Anopheles</taxon>
    </lineage>
</organism>
<comment type="function">
    <text evidence="1">Acts as a sulfur carrier required for 2-thiolation of mcm(5)S(2)U at tRNA wobble positions of cytosolic tRNA(Lys), tRNA(Glu) and tRNA(Gln). Serves as sulfur donor in tRNA 2-thiolation reaction by being thiocarboxylated (-COSH) at its C-terminus by MOCS3. The sulfur is then transferred to tRNA to form 2-thiolation of mcm(5)S(2)U. Also acts as a ubiquitin-like protein (UBL) that is covalently conjugated via an isopeptide bond to lysine residues of target proteins. The thiocarboxylated form serves as substrate for conjugation and oxidative stress specifically induces the formation of UBL-protein conjugates.</text>
</comment>
<comment type="pathway">
    <text evidence="1">tRNA modification; 5-methoxycarbonylmethyl-2-thiouridine-tRNA biosynthesis.</text>
</comment>
<comment type="subcellular location">
    <subcellularLocation>
        <location evidence="1">Cytoplasm</location>
    </subcellularLocation>
</comment>
<comment type="PTM">
    <text evidence="1">C-terminal thiocarboxylation occurs in 2 steps, it is first acyl-adenylated (-COAMP) via the hesA/moeB/thiF part of the MOCS3 homolog, then thiocarboxylated (-COSH) via the rhodanese domain of the MOCS3 homolog.</text>
</comment>
<comment type="similarity">
    <text evidence="1">Belongs to the URM1 family.</text>
</comment>
<dbReference type="EMBL" id="AAAB01008960">
    <property type="protein sequence ID" value="EAA11560.4"/>
    <property type="molecule type" value="Genomic_DNA"/>
</dbReference>
<dbReference type="SMR" id="Q7Q6I6"/>
<dbReference type="FunCoup" id="Q7Q6I6">
    <property type="interactions" value="1496"/>
</dbReference>
<dbReference type="STRING" id="7165.Q7Q6I6"/>
<dbReference type="PaxDb" id="7165-AGAP005823-PA"/>
<dbReference type="EnsemblMetazoa" id="AGAP005823-RA">
    <property type="protein sequence ID" value="AGAP005823-PA"/>
    <property type="gene ID" value="AGAP005823"/>
</dbReference>
<dbReference type="GeneID" id="1276492"/>
<dbReference type="KEGG" id="aga:1276492"/>
<dbReference type="CTD" id="81605"/>
<dbReference type="VEuPathDB" id="VectorBase:AGAMI1_014476"/>
<dbReference type="VEuPathDB" id="VectorBase:AGAP005823"/>
<dbReference type="eggNOG" id="KOG4146">
    <property type="taxonomic scope" value="Eukaryota"/>
</dbReference>
<dbReference type="HOGENOM" id="CLU_148208_0_0_1"/>
<dbReference type="InParanoid" id="Q7Q6I6"/>
<dbReference type="OMA" id="DYELQPN"/>
<dbReference type="OrthoDB" id="10248987at2759"/>
<dbReference type="PhylomeDB" id="Q7Q6I6"/>
<dbReference type="UniPathway" id="UPA00988"/>
<dbReference type="Proteomes" id="UP000007062">
    <property type="component" value="Chromosome 2L"/>
</dbReference>
<dbReference type="GO" id="GO:0005829">
    <property type="term" value="C:cytosol"/>
    <property type="evidence" value="ECO:0007669"/>
    <property type="project" value="UniProtKB-UniRule"/>
</dbReference>
<dbReference type="GO" id="GO:0005634">
    <property type="term" value="C:nucleus"/>
    <property type="evidence" value="ECO:0000318"/>
    <property type="project" value="GO_Central"/>
</dbReference>
<dbReference type="GO" id="GO:0031386">
    <property type="term" value="F:protein tag activity"/>
    <property type="evidence" value="ECO:0000318"/>
    <property type="project" value="GO_Central"/>
</dbReference>
<dbReference type="GO" id="GO:0032447">
    <property type="term" value="P:protein urmylation"/>
    <property type="evidence" value="ECO:0000318"/>
    <property type="project" value="GO_Central"/>
</dbReference>
<dbReference type="GO" id="GO:0034227">
    <property type="term" value="P:tRNA thio-modification"/>
    <property type="evidence" value="ECO:0007669"/>
    <property type="project" value="UniProtKB-UniRule"/>
</dbReference>
<dbReference type="GO" id="GO:0002098">
    <property type="term" value="P:tRNA wobble uridine modification"/>
    <property type="evidence" value="ECO:0007669"/>
    <property type="project" value="UniProtKB-UniRule"/>
</dbReference>
<dbReference type="CDD" id="cd01764">
    <property type="entry name" value="Ubl_Urm1"/>
    <property type="match status" value="1"/>
</dbReference>
<dbReference type="Gene3D" id="3.10.20.30">
    <property type="match status" value="1"/>
</dbReference>
<dbReference type="HAMAP" id="MF_03048">
    <property type="entry name" value="Urm1"/>
    <property type="match status" value="1"/>
</dbReference>
<dbReference type="InterPro" id="IPR012675">
    <property type="entry name" value="Beta-grasp_dom_sf"/>
</dbReference>
<dbReference type="InterPro" id="IPR016155">
    <property type="entry name" value="Mopterin_synth/thiamin_S_b"/>
</dbReference>
<dbReference type="InterPro" id="IPR015221">
    <property type="entry name" value="Urm1"/>
</dbReference>
<dbReference type="PANTHER" id="PTHR14986">
    <property type="entry name" value="RURM1 PROTEIN"/>
    <property type="match status" value="1"/>
</dbReference>
<dbReference type="Pfam" id="PF09138">
    <property type="entry name" value="Urm1"/>
    <property type="match status" value="1"/>
</dbReference>
<dbReference type="PIRSF" id="PIRSF037379">
    <property type="entry name" value="Ubiquitin-related_modifier_1"/>
    <property type="match status" value="1"/>
</dbReference>
<dbReference type="SUPFAM" id="SSF54285">
    <property type="entry name" value="MoaD/ThiS"/>
    <property type="match status" value="1"/>
</dbReference>
<name>URM1_ANOGA</name>
<proteinExistence type="inferred from homology"/>
<protein>
    <recommendedName>
        <fullName evidence="1">Ubiquitin-related modifier 1 homolog</fullName>
    </recommendedName>
</protein>
<gene>
    <name type="ORF">AGAP005823</name>
</gene>
<sequence length="109" mass="11954">MDDSIDEEVISGGSTITVEFSGGAETLFGGVKEHIVPLDGSKIVLLEEMLRWLRDHLLTGDAGLFLQENTVRPGILVMINDTDWDLMGETEYILQPGDHILFISTLHGG</sequence>
<feature type="chain" id="PRO_0000367852" description="Ubiquitin-related modifier 1 homolog">
    <location>
        <begin position="1"/>
        <end position="109"/>
    </location>
</feature>
<feature type="modified residue" description="1-thioglycine" evidence="1">
    <location>
        <position position="109"/>
    </location>
</feature>
<feature type="cross-link" description="Glycyl lysine isopeptide (Gly-Lys) (interchain with K-? in acceptor proteins)" evidence="1">
    <location>
        <position position="109"/>
    </location>
</feature>